<comment type="function">
    <text evidence="1">Major role in the synthesis of nucleoside triphosphates other than ATP. The ATP gamma phosphate is transferred to the NDP beta phosphate via a ping-pong mechanism, using a phosphorylated active-site intermediate.</text>
</comment>
<comment type="catalytic activity">
    <reaction evidence="1">
        <text>a 2'-deoxyribonucleoside 5'-diphosphate + ATP = a 2'-deoxyribonucleoside 5'-triphosphate + ADP</text>
        <dbReference type="Rhea" id="RHEA:44640"/>
        <dbReference type="ChEBI" id="CHEBI:30616"/>
        <dbReference type="ChEBI" id="CHEBI:61560"/>
        <dbReference type="ChEBI" id="CHEBI:73316"/>
        <dbReference type="ChEBI" id="CHEBI:456216"/>
        <dbReference type="EC" id="2.7.4.6"/>
    </reaction>
</comment>
<comment type="catalytic activity">
    <reaction evidence="1">
        <text>a ribonucleoside 5'-diphosphate + ATP = a ribonucleoside 5'-triphosphate + ADP</text>
        <dbReference type="Rhea" id="RHEA:18113"/>
        <dbReference type="ChEBI" id="CHEBI:30616"/>
        <dbReference type="ChEBI" id="CHEBI:57930"/>
        <dbReference type="ChEBI" id="CHEBI:61557"/>
        <dbReference type="ChEBI" id="CHEBI:456216"/>
        <dbReference type="EC" id="2.7.4.6"/>
    </reaction>
</comment>
<comment type="cofactor">
    <cofactor evidence="1">
        <name>Mg(2+)</name>
        <dbReference type="ChEBI" id="CHEBI:18420"/>
    </cofactor>
</comment>
<comment type="subunit">
    <text evidence="1">Homotetramer.</text>
</comment>
<comment type="subcellular location">
    <subcellularLocation>
        <location evidence="1">Cytoplasm</location>
    </subcellularLocation>
</comment>
<comment type="similarity">
    <text evidence="1">Belongs to the NDK family.</text>
</comment>
<feature type="chain" id="PRO_1000192263" description="Nucleoside diphosphate kinase">
    <location>
        <begin position="1"/>
        <end position="149"/>
    </location>
</feature>
<feature type="active site" description="Pros-phosphohistidine intermediate" evidence="1">
    <location>
        <position position="115"/>
    </location>
</feature>
<feature type="binding site" evidence="1">
    <location>
        <position position="9"/>
    </location>
    <ligand>
        <name>ATP</name>
        <dbReference type="ChEBI" id="CHEBI:30616"/>
    </ligand>
</feature>
<feature type="binding site" evidence="1">
    <location>
        <position position="57"/>
    </location>
    <ligand>
        <name>ATP</name>
        <dbReference type="ChEBI" id="CHEBI:30616"/>
    </ligand>
</feature>
<feature type="binding site" evidence="1">
    <location>
        <position position="85"/>
    </location>
    <ligand>
        <name>ATP</name>
        <dbReference type="ChEBI" id="CHEBI:30616"/>
    </ligand>
</feature>
<feature type="binding site" evidence="1">
    <location>
        <position position="91"/>
    </location>
    <ligand>
        <name>ATP</name>
        <dbReference type="ChEBI" id="CHEBI:30616"/>
    </ligand>
</feature>
<feature type="binding site" evidence="1">
    <location>
        <position position="102"/>
    </location>
    <ligand>
        <name>ATP</name>
        <dbReference type="ChEBI" id="CHEBI:30616"/>
    </ligand>
</feature>
<feature type="binding site" evidence="1">
    <location>
        <position position="112"/>
    </location>
    <ligand>
        <name>ATP</name>
        <dbReference type="ChEBI" id="CHEBI:30616"/>
    </ligand>
</feature>
<name>NDK_HELMI</name>
<evidence type="ECO:0000255" key="1">
    <source>
        <dbReference type="HAMAP-Rule" id="MF_00451"/>
    </source>
</evidence>
<sequence>MERTYLMIKPDGVQRGLVGEIISRFEKKGFKLVGMKFLRLTREMAEKHYAEHVGKPFFAGLVDYIISGPVVAMCWEGKDIVSVSREMMGATNPAKAAPGTIRGTYAVDIGRNIIHGSDSPASAERELAIYFQSDELVEWDRTLQGWLTE</sequence>
<protein>
    <recommendedName>
        <fullName evidence="1">Nucleoside diphosphate kinase</fullName>
        <shortName evidence="1">NDK</shortName>
        <shortName evidence="1">NDP kinase</shortName>
        <ecNumber evidence="1">2.7.4.6</ecNumber>
    </recommendedName>
    <alternativeName>
        <fullName evidence="1">Nucleoside-2-P kinase</fullName>
    </alternativeName>
</protein>
<proteinExistence type="inferred from homology"/>
<accession>B0TBN6</accession>
<gene>
    <name evidence="1" type="primary">ndk</name>
    <name type="ordered locus">Helmi_12500</name>
    <name type="ORF">HM1_0677</name>
</gene>
<reference key="1">
    <citation type="journal article" date="2008" name="J. Bacteriol.">
        <title>The genome of Heliobacterium modesticaldum, a phototrophic representative of the Firmicutes containing the simplest photosynthetic apparatus.</title>
        <authorList>
            <person name="Sattley W.M."/>
            <person name="Madigan M.T."/>
            <person name="Swingley W.D."/>
            <person name="Cheung P.C."/>
            <person name="Clocksin K.M."/>
            <person name="Conrad A.L."/>
            <person name="Dejesa L.C."/>
            <person name="Honchak B.M."/>
            <person name="Jung D.O."/>
            <person name="Karbach L.E."/>
            <person name="Kurdoglu A."/>
            <person name="Lahiri S."/>
            <person name="Mastrian S.D."/>
            <person name="Page L.E."/>
            <person name="Taylor H.L."/>
            <person name="Wang Z.T."/>
            <person name="Raymond J."/>
            <person name="Chen M."/>
            <person name="Blankenship R.E."/>
            <person name="Touchman J.W."/>
        </authorList>
    </citation>
    <scope>NUCLEOTIDE SEQUENCE [LARGE SCALE GENOMIC DNA]</scope>
    <source>
        <strain>ATCC 51547 / Ice1</strain>
    </source>
</reference>
<organism>
    <name type="scientific">Heliobacterium modesticaldum (strain ATCC 51547 / Ice1)</name>
    <dbReference type="NCBI Taxonomy" id="498761"/>
    <lineage>
        <taxon>Bacteria</taxon>
        <taxon>Bacillati</taxon>
        <taxon>Bacillota</taxon>
        <taxon>Clostridia</taxon>
        <taxon>Eubacteriales</taxon>
        <taxon>Heliobacteriaceae</taxon>
        <taxon>Heliomicrobium</taxon>
    </lineage>
</organism>
<keyword id="KW-0067">ATP-binding</keyword>
<keyword id="KW-0963">Cytoplasm</keyword>
<keyword id="KW-0418">Kinase</keyword>
<keyword id="KW-0460">Magnesium</keyword>
<keyword id="KW-0479">Metal-binding</keyword>
<keyword id="KW-0546">Nucleotide metabolism</keyword>
<keyword id="KW-0547">Nucleotide-binding</keyword>
<keyword id="KW-0597">Phosphoprotein</keyword>
<keyword id="KW-1185">Reference proteome</keyword>
<keyword id="KW-0808">Transferase</keyword>
<dbReference type="EC" id="2.7.4.6" evidence="1"/>
<dbReference type="EMBL" id="CP000930">
    <property type="protein sequence ID" value="ABZ83875.1"/>
    <property type="molecule type" value="Genomic_DNA"/>
</dbReference>
<dbReference type="RefSeq" id="WP_012282393.1">
    <property type="nucleotide sequence ID" value="NC_010337.2"/>
</dbReference>
<dbReference type="SMR" id="B0TBN6"/>
<dbReference type="STRING" id="498761.HM1_0677"/>
<dbReference type="KEGG" id="hmo:HM1_0677"/>
<dbReference type="eggNOG" id="COG0105">
    <property type="taxonomic scope" value="Bacteria"/>
</dbReference>
<dbReference type="HOGENOM" id="CLU_060216_6_3_9"/>
<dbReference type="OrthoDB" id="9801161at2"/>
<dbReference type="Proteomes" id="UP000008550">
    <property type="component" value="Chromosome"/>
</dbReference>
<dbReference type="GO" id="GO:0005737">
    <property type="term" value="C:cytoplasm"/>
    <property type="evidence" value="ECO:0007669"/>
    <property type="project" value="UniProtKB-SubCell"/>
</dbReference>
<dbReference type="GO" id="GO:0005524">
    <property type="term" value="F:ATP binding"/>
    <property type="evidence" value="ECO:0007669"/>
    <property type="project" value="UniProtKB-UniRule"/>
</dbReference>
<dbReference type="GO" id="GO:0046872">
    <property type="term" value="F:metal ion binding"/>
    <property type="evidence" value="ECO:0007669"/>
    <property type="project" value="UniProtKB-KW"/>
</dbReference>
<dbReference type="GO" id="GO:0004550">
    <property type="term" value="F:nucleoside diphosphate kinase activity"/>
    <property type="evidence" value="ECO:0007669"/>
    <property type="project" value="UniProtKB-UniRule"/>
</dbReference>
<dbReference type="GO" id="GO:0006241">
    <property type="term" value="P:CTP biosynthetic process"/>
    <property type="evidence" value="ECO:0007669"/>
    <property type="project" value="UniProtKB-UniRule"/>
</dbReference>
<dbReference type="GO" id="GO:0006183">
    <property type="term" value="P:GTP biosynthetic process"/>
    <property type="evidence" value="ECO:0007669"/>
    <property type="project" value="UniProtKB-UniRule"/>
</dbReference>
<dbReference type="GO" id="GO:0006228">
    <property type="term" value="P:UTP biosynthetic process"/>
    <property type="evidence" value="ECO:0007669"/>
    <property type="project" value="UniProtKB-UniRule"/>
</dbReference>
<dbReference type="CDD" id="cd04413">
    <property type="entry name" value="NDPk_I"/>
    <property type="match status" value="1"/>
</dbReference>
<dbReference type="FunFam" id="3.30.70.141:FF:000002">
    <property type="entry name" value="Nucleoside diphosphate kinase"/>
    <property type="match status" value="1"/>
</dbReference>
<dbReference type="Gene3D" id="3.30.70.141">
    <property type="entry name" value="Nucleoside diphosphate kinase-like domain"/>
    <property type="match status" value="1"/>
</dbReference>
<dbReference type="HAMAP" id="MF_00451">
    <property type="entry name" value="NDP_kinase"/>
    <property type="match status" value="1"/>
</dbReference>
<dbReference type="InterPro" id="IPR034907">
    <property type="entry name" value="NDK-like_dom"/>
</dbReference>
<dbReference type="InterPro" id="IPR036850">
    <property type="entry name" value="NDK-like_dom_sf"/>
</dbReference>
<dbReference type="InterPro" id="IPR001564">
    <property type="entry name" value="Nucleoside_diP_kinase"/>
</dbReference>
<dbReference type="InterPro" id="IPR023005">
    <property type="entry name" value="Nucleoside_diP_kinase_AS"/>
</dbReference>
<dbReference type="NCBIfam" id="NF001908">
    <property type="entry name" value="PRK00668.1"/>
    <property type="match status" value="1"/>
</dbReference>
<dbReference type="PANTHER" id="PTHR11349">
    <property type="entry name" value="NUCLEOSIDE DIPHOSPHATE KINASE"/>
    <property type="match status" value="1"/>
</dbReference>
<dbReference type="Pfam" id="PF00334">
    <property type="entry name" value="NDK"/>
    <property type="match status" value="1"/>
</dbReference>
<dbReference type="PRINTS" id="PR01243">
    <property type="entry name" value="NUCDPKINASE"/>
</dbReference>
<dbReference type="SMART" id="SM00562">
    <property type="entry name" value="NDK"/>
    <property type="match status" value="1"/>
</dbReference>
<dbReference type="SUPFAM" id="SSF54919">
    <property type="entry name" value="Nucleoside diphosphate kinase, NDK"/>
    <property type="match status" value="1"/>
</dbReference>
<dbReference type="PROSITE" id="PS00469">
    <property type="entry name" value="NDPK"/>
    <property type="match status" value="1"/>
</dbReference>
<dbReference type="PROSITE" id="PS51374">
    <property type="entry name" value="NDPK_LIKE"/>
    <property type="match status" value="1"/>
</dbReference>